<protein>
    <recommendedName>
        <fullName evidence="1">Ubiquitin-related modifier 1</fullName>
    </recommendedName>
</protein>
<proteinExistence type="inferred from homology"/>
<feature type="chain" id="PRO_0000367882" description="Ubiquitin-related modifier 1">
    <location>
        <begin position="1"/>
        <end position="101"/>
    </location>
</feature>
<feature type="modified residue" description="1-thioglycine" evidence="1">
    <location>
        <position position="101"/>
    </location>
</feature>
<feature type="cross-link" description="Glycyl lysine isopeptide (Gly-Lys) (interchain with K-? in acceptor proteins)" evidence="1">
    <location>
        <position position="101"/>
    </location>
</feature>
<comment type="function">
    <text evidence="1">Acts as a sulfur carrier required for 2-thiolation of mcm(5)S(2)U at tRNA wobble positions of cytosolic tRNA(Lys), tRNA(Glu) and tRNA(Gln). Serves as sulfur donor in tRNA 2-thiolation reaction by being thiocarboxylated (-COSH) at its C-terminus by the MOCS3 homolog UBA4. The sulfur is then transferred to tRNA to form 2-thiolation of mcm(5)S(2)U. Prior mcm(5) tRNA modification by the elongator complex is required for 2-thiolation. Also acts as a ubiquitin-like protein (UBL) that is covalently conjugated via an isopeptide bond to lysine residues of target proteins such as AHP1. The thiocarboxylated form serves as substrate for conjugation and oxidative stress specifically induces the formation of UBL-protein conjugates.</text>
</comment>
<comment type="pathway">
    <text evidence="1">tRNA modification; 5-methoxycarbonylmethyl-2-thiouridine-tRNA biosynthesis.</text>
</comment>
<comment type="subcellular location">
    <subcellularLocation>
        <location evidence="1">Cytoplasm</location>
    </subcellularLocation>
</comment>
<comment type="PTM">
    <text evidence="1">C-terminal thiocarboxylation occurs in 2 steps, it is first acyl-adenylated (-COAMP) via the hesA/moeB/thiF part of UBA4, then thiocarboxylated (-COSH) via the rhodanese domain of UBA4.</text>
</comment>
<comment type="similarity">
    <text evidence="1">Belongs to the URM1 family.</text>
</comment>
<gene>
    <name evidence="1" type="primary">URM1</name>
    <name type="ordered locus">KLLA0D14157g</name>
</gene>
<sequence length="101" mass="11427">MVRVIIEFLGGLDVIVKKQRQYKVDVQLDGKDEINVGDLIQWIVDNLIEHEGDVNVFLENDSIRPGILTLINDTDWELEGEKEYVLEDGDVVSFTSTLHGG</sequence>
<organism>
    <name type="scientific">Kluyveromyces lactis (strain ATCC 8585 / CBS 2359 / DSM 70799 / NBRC 1267 / NRRL Y-1140 / WM37)</name>
    <name type="common">Yeast</name>
    <name type="synonym">Candida sphaerica</name>
    <dbReference type="NCBI Taxonomy" id="284590"/>
    <lineage>
        <taxon>Eukaryota</taxon>
        <taxon>Fungi</taxon>
        <taxon>Dikarya</taxon>
        <taxon>Ascomycota</taxon>
        <taxon>Saccharomycotina</taxon>
        <taxon>Saccharomycetes</taxon>
        <taxon>Saccharomycetales</taxon>
        <taxon>Saccharomycetaceae</taxon>
        <taxon>Kluyveromyces</taxon>
    </lineage>
</organism>
<reference key="1">
    <citation type="journal article" date="2004" name="Nature">
        <title>Genome evolution in yeasts.</title>
        <authorList>
            <person name="Dujon B."/>
            <person name="Sherman D."/>
            <person name="Fischer G."/>
            <person name="Durrens P."/>
            <person name="Casaregola S."/>
            <person name="Lafontaine I."/>
            <person name="de Montigny J."/>
            <person name="Marck C."/>
            <person name="Neuveglise C."/>
            <person name="Talla E."/>
            <person name="Goffard N."/>
            <person name="Frangeul L."/>
            <person name="Aigle M."/>
            <person name="Anthouard V."/>
            <person name="Babour A."/>
            <person name="Barbe V."/>
            <person name="Barnay S."/>
            <person name="Blanchin S."/>
            <person name="Beckerich J.-M."/>
            <person name="Beyne E."/>
            <person name="Bleykasten C."/>
            <person name="Boisrame A."/>
            <person name="Boyer J."/>
            <person name="Cattolico L."/>
            <person name="Confanioleri F."/>
            <person name="de Daruvar A."/>
            <person name="Despons L."/>
            <person name="Fabre E."/>
            <person name="Fairhead C."/>
            <person name="Ferry-Dumazet H."/>
            <person name="Groppi A."/>
            <person name="Hantraye F."/>
            <person name="Hennequin C."/>
            <person name="Jauniaux N."/>
            <person name="Joyet P."/>
            <person name="Kachouri R."/>
            <person name="Kerrest A."/>
            <person name="Koszul R."/>
            <person name="Lemaire M."/>
            <person name="Lesur I."/>
            <person name="Ma L."/>
            <person name="Muller H."/>
            <person name="Nicaud J.-M."/>
            <person name="Nikolski M."/>
            <person name="Oztas S."/>
            <person name="Ozier-Kalogeropoulos O."/>
            <person name="Pellenz S."/>
            <person name="Potier S."/>
            <person name="Richard G.-F."/>
            <person name="Straub M.-L."/>
            <person name="Suleau A."/>
            <person name="Swennen D."/>
            <person name="Tekaia F."/>
            <person name="Wesolowski-Louvel M."/>
            <person name="Westhof E."/>
            <person name="Wirth B."/>
            <person name="Zeniou-Meyer M."/>
            <person name="Zivanovic Y."/>
            <person name="Bolotin-Fukuhara M."/>
            <person name="Thierry A."/>
            <person name="Bouchier C."/>
            <person name="Caudron B."/>
            <person name="Scarpelli C."/>
            <person name="Gaillardin C."/>
            <person name="Weissenbach J."/>
            <person name="Wincker P."/>
            <person name="Souciet J.-L."/>
        </authorList>
    </citation>
    <scope>NUCLEOTIDE SEQUENCE [LARGE SCALE GENOMIC DNA]</scope>
    <source>
        <strain>ATCC 8585 / CBS 2359 / DSM 70799 / NBRC 1267 / NRRL Y-1140 / WM37</strain>
    </source>
</reference>
<keyword id="KW-0963">Cytoplasm</keyword>
<keyword id="KW-1017">Isopeptide bond</keyword>
<keyword id="KW-1185">Reference proteome</keyword>
<keyword id="KW-0819">tRNA processing</keyword>
<keyword id="KW-0833">Ubl conjugation pathway</keyword>
<accession>Q6CQU4</accession>
<dbReference type="EMBL" id="CR382124">
    <property type="protein sequence ID" value="CAH00791.1"/>
    <property type="molecule type" value="Genomic_DNA"/>
</dbReference>
<dbReference type="RefSeq" id="XP_453695.1">
    <property type="nucleotide sequence ID" value="XM_453695.1"/>
</dbReference>
<dbReference type="SMR" id="Q6CQU4"/>
<dbReference type="FunCoup" id="Q6CQU4">
    <property type="interactions" value="943"/>
</dbReference>
<dbReference type="STRING" id="284590.Q6CQU4"/>
<dbReference type="PaxDb" id="284590-Q6CQU4"/>
<dbReference type="KEGG" id="kla:KLLA0_D14157g"/>
<dbReference type="eggNOG" id="KOG4146">
    <property type="taxonomic scope" value="Eukaryota"/>
</dbReference>
<dbReference type="HOGENOM" id="CLU_148208_0_1_1"/>
<dbReference type="InParanoid" id="Q6CQU4"/>
<dbReference type="OMA" id="IHFMAEK"/>
<dbReference type="UniPathway" id="UPA00988"/>
<dbReference type="Proteomes" id="UP000000598">
    <property type="component" value="Chromosome D"/>
</dbReference>
<dbReference type="GO" id="GO:0005829">
    <property type="term" value="C:cytosol"/>
    <property type="evidence" value="ECO:0007669"/>
    <property type="project" value="UniProtKB-UniRule"/>
</dbReference>
<dbReference type="GO" id="GO:0032447">
    <property type="term" value="P:protein urmylation"/>
    <property type="evidence" value="ECO:0007669"/>
    <property type="project" value="UniProtKB-UniRule"/>
</dbReference>
<dbReference type="GO" id="GO:0034227">
    <property type="term" value="P:tRNA thio-modification"/>
    <property type="evidence" value="ECO:0007669"/>
    <property type="project" value="UniProtKB-UniRule"/>
</dbReference>
<dbReference type="GO" id="GO:0002098">
    <property type="term" value="P:tRNA wobble uridine modification"/>
    <property type="evidence" value="ECO:0007669"/>
    <property type="project" value="UniProtKB-UniRule"/>
</dbReference>
<dbReference type="CDD" id="cd01764">
    <property type="entry name" value="Ubl_Urm1"/>
    <property type="match status" value="1"/>
</dbReference>
<dbReference type="Gene3D" id="3.10.20.30">
    <property type="match status" value="1"/>
</dbReference>
<dbReference type="HAMAP" id="MF_03048">
    <property type="entry name" value="Urm1"/>
    <property type="match status" value="1"/>
</dbReference>
<dbReference type="InterPro" id="IPR012675">
    <property type="entry name" value="Beta-grasp_dom_sf"/>
</dbReference>
<dbReference type="InterPro" id="IPR016155">
    <property type="entry name" value="Mopterin_synth/thiamin_S_b"/>
</dbReference>
<dbReference type="InterPro" id="IPR015221">
    <property type="entry name" value="Urm1"/>
</dbReference>
<dbReference type="PANTHER" id="PTHR14986">
    <property type="entry name" value="RURM1 PROTEIN"/>
    <property type="match status" value="1"/>
</dbReference>
<dbReference type="Pfam" id="PF09138">
    <property type="entry name" value="Urm1"/>
    <property type="match status" value="1"/>
</dbReference>
<dbReference type="PIRSF" id="PIRSF037379">
    <property type="entry name" value="Ubiquitin-related_modifier_1"/>
    <property type="match status" value="1"/>
</dbReference>
<dbReference type="SUPFAM" id="SSF54285">
    <property type="entry name" value="MoaD/ThiS"/>
    <property type="match status" value="1"/>
</dbReference>
<evidence type="ECO:0000255" key="1">
    <source>
        <dbReference type="HAMAP-Rule" id="MF_03048"/>
    </source>
</evidence>
<name>URM1_KLULA</name>